<accession>A5IGU3</accession>
<keyword id="KW-0067">ATP-binding</keyword>
<keyword id="KW-0436">Ligase</keyword>
<keyword id="KW-0547">Nucleotide-binding</keyword>
<comment type="function">
    <text evidence="1">ATP-dependent carboxylate-amine ligase which exhibits weak glutamate--cysteine ligase activity.</text>
</comment>
<comment type="catalytic activity">
    <reaction evidence="1">
        <text>L-cysteine + L-glutamate + ATP = gamma-L-glutamyl-L-cysteine + ADP + phosphate + H(+)</text>
        <dbReference type="Rhea" id="RHEA:13285"/>
        <dbReference type="ChEBI" id="CHEBI:15378"/>
        <dbReference type="ChEBI" id="CHEBI:29985"/>
        <dbReference type="ChEBI" id="CHEBI:30616"/>
        <dbReference type="ChEBI" id="CHEBI:35235"/>
        <dbReference type="ChEBI" id="CHEBI:43474"/>
        <dbReference type="ChEBI" id="CHEBI:58173"/>
        <dbReference type="ChEBI" id="CHEBI:456216"/>
        <dbReference type="EC" id="6.3.2.2"/>
    </reaction>
</comment>
<comment type="similarity">
    <text evidence="1">Belongs to the glutamate--cysteine ligase type 2 family. YbdK subfamily.</text>
</comment>
<dbReference type="EC" id="6.3.2.2" evidence="1"/>
<dbReference type="EMBL" id="CP000675">
    <property type="protein sequence ID" value="ABQ56593.1"/>
    <property type="molecule type" value="Genomic_DNA"/>
</dbReference>
<dbReference type="RefSeq" id="WP_011945778.1">
    <property type="nucleotide sequence ID" value="NC_009494.2"/>
</dbReference>
<dbReference type="SMR" id="A5IGU3"/>
<dbReference type="KEGG" id="lpc:LPC_2680"/>
<dbReference type="HOGENOM" id="CLU_044848_1_1_6"/>
<dbReference type="GO" id="GO:0005524">
    <property type="term" value="F:ATP binding"/>
    <property type="evidence" value="ECO:0007669"/>
    <property type="project" value="UniProtKB-KW"/>
</dbReference>
<dbReference type="GO" id="GO:0004357">
    <property type="term" value="F:glutamate-cysteine ligase activity"/>
    <property type="evidence" value="ECO:0007669"/>
    <property type="project" value="UniProtKB-EC"/>
</dbReference>
<dbReference type="GO" id="GO:0042398">
    <property type="term" value="P:modified amino acid biosynthetic process"/>
    <property type="evidence" value="ECO:0007669"/>
    <property type="project" value="InterPro"/>
</dbReference>
<dbReference type="Gene3D" id="3.30.590.20">
    <property type="match status" value="1"/>
</dbReference>
<dbReference type="HAMAP" id="MF_01609">
    <property type="entry name" value="Glu_cys_ligase_2"/>
    <property type="match status" value="1"/>
</dbReference>
<dbReference type="InterPro" id="IPR050141">
    <property type="entry name" value="GCL_type2/YbdK_subfam"/>
</dbReference>
<dbReference type="InterPro" id="IPR006336">
    <property type="entry name" value="GCS2"/>
</dbReference>
<dbReference type="InterPro" id="IPR014746">
    <property type="entry name" value="Gln_synth/guanido_kin_cat_dom"/>
</dbReference>
<dbReference type="InterPro" id="IPR011793">
    <property type="entry name" value="YbdK"/>
</dbReference>
<dbReference type="NCBIfam" id="TIGR02050">
    <property type="entry name" value="gshA_cyan_rel"/>
    <property type="match status" value="1"/>
</dbReference>
<dbReference type="NCBIfam" id="NF010040">
    <property type="entry name" value="PRK13516.1"/>
    <property type="match status" value="1"/>
</dbReference>
<dbReference type="PANTHER" id="PTHR36510">
    <property type="entry name" value="GLUTAMATE--CYSTEINE LIGASE 2-RELATED"/>
    <property type="match status" value="1"/>
</dbReference>
<dbReference type="PANTHER" id="PTHR36510:SF1">
    <property type="entry name" value="GLUTAMATE--CYSTEINE LIGASE 2-RELATED"/>
    <property type="match status" value="1"/>
</dbReference>
<dbReference type="Pfam" id="PF04107">
    <property type="entry name" value="GCS2"/>
    <property type="match status" value="1"/>
</dbReference>
<dbReference type="SUPFAM" id="SSF55931">
    <property type="entry name" value="Glutamine synthetase/guanido kinase"/>
    <property type="match status" value="1"/>
</dbReference>
<protein>
    <recommendedName>
        <fullName evidence="1">Putative glutamate--cysteine ligase 2-2</fullName>
        <ecNumber evidence="1">6.3.2.2</ecNumber>
    </recommendedName>
    <alternativeName>
        <fullName evidence="1">Gamma-glutamylcysteine synthetase 2-2</fullName>
        <shortName evidence="1">GCS 2-2</shortName>
        <shortName evidence="1">Gamma-GCS 2-2</shortName>
    </alternativeName>
</protein>
<organism>
    <name type="scientific">Legionella pneumophila (strain Corby)</name>
    <dbReference type="NCBI Taxonomy" id="400673"/>
    <lineage>
        <taxon>Bacteria</taxon>
        <taxon>Pseudomonadati</taxon>
        <taxon>Pseudomonadota</taxon>
        <taxon>Gammaproteobacteria</taxon>
        <taxon>Legionellales</taxon>
        <taxon>Legionellaceae</taxon>
        <taxon>Legionella</taxon>
    </lineage>
</organism>
<evidence type="ECO:0000255" key="1">
    <source>
        <dbReference type="HAMAP-Rule" id="MF_01609"/>
    </source>
</evidence>
<name>GCS22_LEGPC</name>
<gene>
    <name type="ordered locus">LPC_2680</name>
</gene>
<feature type="chain" id="PRO_0000323503" description="Putative glutamate--cysteine ligase 2-2">
    <location>
        <begin position="1"/>
        <end position="373"/>
    </location>
</feature>
<proteinExistence type="inferred from homology"/>
<reference key="1">
    <citation type="submission" date="2006-11" db="EMBL/GenBank/DDBJ databases">
        <title>Identification and characterization of a new conjugation/ type IVA secretion system (trb/tra) of L. pneumophila Corby localized on a mobile genomic island.</title>
        <authorList>
            <person name="Gloeckner G."/>
            <person name="Albert-Weissenberger C."/>
            <person name="Weinmann E."/>
            <person name="Jacobi S."/>
            <person name="Schunder E."/>
            <person name="Steinert M."/>
            <person name="Buchrieser C."/>
            <person name="Hacker J."/>
            <person name="Heuner K."/>
        </authorList>
    </citation>
    <scope>NUCLEOTIDE SEQUENCE [LARGE SCALE GENOMIC DNA]</scope>
    <source>
        <strain>Corby</strain>
    </source>
</reference>
<sequence length="373" mass="42911">MPLQPFKTSNLLTMGVELELQLISLSNFDLTAASPDILELLGRSSFPGSFTPEITESMLEIATDVHEEYDQLLKQLFHIRDALVTVGDRLNIGICGGGTHPFQMWSDQRIFNKTRFIEVSELYGYLTKQFTIFGQHIHIGCEDGNQALFLLHSLNRYIPHFIALSASSPFVQSKDTLYNSARLNSVFAFPLSGRAPFVLNWDEFSLGYFEKMEHTGIVKSMKDFYWDLRPKPEFGTIEMRVCDSPLTVERAAALACYMQALCSYLLENKEPLPHEDDYLVYNYNRFQACRFGLDGTLVHPKTYEQILLREDILTTLRRLKPYANQLNSTMALEHIYEITHKGSDASFLREKYAEHRTLESVVNESLKQFRRSK</sequence>